<proteinExistence type="uncertain"/>
<sequence>MDLSCSCATGGSCTCASSCKCKEYKCTSCKKNCCSCCPMGCAKCAQGCT</sequence>
<feature type="chain" id="PRO_0000343426" description="Putative metallothionein MT1DP">
    <location>
        <begin position="1"/>
        <end position="49"/>
    </location>
</feature>
<feature type="region of interest" description="Beta">
    <location>
        <begin position="1"/>
        <end position="29"/>
    </location>
</feature>
<feature type="region of interest" description="Alpha">
    <location>
        <begin position="30"/>
        <end position="49"/>
    </location>
</feature>
<feature type="binding site" evidence="2">
    <location>
        <position position="5"/>
    </location>
    <ligand>
        <name>a divalent metal cation</name>
        <dbReference type="ChEBI" id="CHEBI:60240"/>
        <label>1</label>
        <note>in cluster B</note>
    </ligand>
</feature>
<feature type="binding site" evidence="2">
    <location>
        <position position="7"/>
    </location>
    <ligand>
        <name>a divalent metal cation</name>
        <dbReference type="ChEBI" id="CHEBI:60240"/>
        <label>1</label>
        <note>in cluster B</note>
    </ligand>
</feature>
<feature type="binding site" evidence="2">
    <location>
        <position position="7"/>
    </location>
    <ligand>
        <name>a divalent metal cation</name>
        <dbReference type="ChEBI" id="CHEBI:60240"/>
        <label>2</label>
        <note>in cluster B</note>
    </ligand>
</feature>
<feature type="binding site" evidence="2">
    <location>
        <position position="13"/>
    </location>
    <ligand>
        <name>a divalent metal cation</name>
        <dbReference type="ChEBI" id="CHEBI:60240"/>
        <label>2</label>
        <note>in cluster B</note>
    </ligand>
</feature>
<feature type="binding site" evidence="2">
    <location>
        <position position="15"/>
    </location>
    <ligand>
        <name>a divalent metal cation</name>
        <dbReference type="ChEBI" id="CHEBI:60240"/>
        <label>2</label>
        <note>in cluster B</note>
    </ligand>
</feature>
<feature type="binding site" evidence="2">
    <location>
        <position position="15"/>
    </location>
    <ligand>
        <name>a divalent metal cation</name>
        <dbReference type="ChEBI" id="CHEBI:60240"/>
        <label>3</label>
        <note>in cluster B</note>
    </ligand>
</feature>
<feature type="binding site" evidence="2">
    <location>
        <position position="19"/>
    </location>
    <ligand>
        <name>a divalent metal cation</name>
        <dbReference type="ChEBI" id="CHEBI:60240"/>
        <label>3</label>
        <note>in cluster B</note>
    </ligand>
</feature>
<feature type="binding site" evidence="2">
    <location>
        <position position="21"/>
    </location>
    <ligand>
        <name>a divalent metal cation</name>
        <dbReference type="ChEBI" id="CHEBI:60240"/>
        <label>1</label>
        <note>in cluster B</note>
    </ligand>
</feature>
<feature type="binding site" evidence="2">
    <location>
        <position position="26"/>
    </location>
    <ligand>
        <name>a divalent metal cation</name>
        <dbReference type="ChEBI" id="CHEBI:60240"/>
        <label>2</label>
        <note>in cluster B</note>
    </ligand>
</feature>
<feature type="binding site" evidence="2">
    <location>
        <position position="29"/>
    </location>
    <ligand>
        <name>a divalent metal cation</name>
        <dbReference type="ChEBI" id="CHEBI:60240"/>
        <label>3</label>
        <note>in cluster B</note>
    </ligand>
</feature>
<feature type="binding site" evidence="2">
    <location>
        <position position="33"/>
    </location>
    <ligand>
        <name>a divalent metal cation</name>
        <dbReference type="ChEBI" id="CHEBI:60240"/>
        <label>4</label>
        <note>in cluster A</note>
    </ligand>
</feature>
<feature type="binding site" evidence="2">
    <location>
        <position position="34"/>
    </location>
    <ligand>
        <name>a divalent metal cation</name>
        <dbReference type="ChEBI" id="CHEBI:60240"/>
        <label>4</label>
        <note>in cluster A</note>
    </ligand>
</feature>
<feature type="binding site" evidence="2">
    <location>
        <position position="34"/>
    </location>
    <ligand>
        <name>a divalent metal cation</name>
        <dbReference type="ChEBI" id="CHEBI:60240"/>
        <label>5</label>
        <note>in cluster A</note>
    </ligand>
</feature>
<feature type="binding site" evidence="2">
    <location>
        <position position="36"/>
    </location>
    <ligand>
        <name>a divalent metal cation</name>
        <dbReference type="ChEBI" id="CHEBI:60240"/>
        <label>5</label>
        <note>in cluster A</note>
    </ligand>
</feature>
<feature type="binding site" evidence="2">
    <location>
        <position position="37"/>
    </location>
    <ligand>
        <name>a divalent metal cation</name>
        <dbReference type="ChEBI" id="CHEBI:60240"/>
        <label>5</label>
        <note>in cluster A</note>
    </ligand>
</feature>
<feature type="binding site" evidence="2">
    <location>
        <position position="37"/>
    </location>
    <ligand>
        <name>a divalent metal cation</name>
        <dbReference type="ChEBI" id="CHEBI:60240"/>
        <label>6</label>
        <note>in cluster A</note>
    </ligand>
</feature>
<feature type="binding site" evidence="2">
    <location>
        <position position="41"/>
    </location>
    <ligand>
        <name>a divalent metal cation</name>
        <dbReference type="ChEBI" id="CHEBI:60240"/>
        <label>6</label>
        <note>in cluster A</note>
    </ligand>
</feature>
<feature type="binding site" evidence="2">
    <location>
        <position position="44"/>
    </location>
    <ligand>
        <name>a divalent metal cation</name>
        <dbReference type="ChEBI" id="CHEBI:60240"/>
        <label>4</label>
        <note>in cluster A</note>
    </ligand>
</feature>
<feature type="binding site" evidence="2">
    <location>
        <position position="44"/>
    </location>
    <ligand>
        <name>a divalent metal cation</name>
        <dbReference type="ChEBI" id="CHEBI:60240"/>
        <label>6</label>
        <note>in cluster A</note>
    </ligand>
</feature>
<feature type="binding site" evidence="2">
    <location>
        <position position="48"/>
    </location>
    <ligand>
        <name>a divalent metal cation</name>
        <dbReference type="ChEBI" id="CHEBI:60240"/>
        <label>4</label>
        <note>in cluster A</note>
    </ligand>
</feature>
<feature type="sequence conflict" description="In Ref. 1; AAO32959." evidence="3" ref="1">
    <original>A</original>
    <variation>S</variation>
    <location>
        <position position="45"/>
    </location>
</feature>
<gene>
    <name type="primary">MT1DP</name>
    <name type="synonym">MTM</name>
</gene>
<name>MT1DP_HUMAN</name>
<protein>
    <recommendedName>
        <fullName>Putative metallothionein MT1DP</fullName>
    </recommendedName>
</protein>
<reference key="1">
    <citation type="submission" date="2004-10" db="EMBL/GenBank/DDBJ databases">
        <authorList>
            <person name="Yu L."/>
        </authorList>
    </citation>
    <scope>NUCLEOTIDE SEQUENCE [MRNA]</scope>
</reference>
<evidence type="ECO:0000250" key="1"/>
<evidence type="ECO:0000250" key="2">
    <source>
        <dbReference type="UniProtKB" id="P02795"/>
    </source>
</evidence>
<evidence type="ECO:0000305" key="3"/>
<accession>A1L3X4</accession>
<accession>Q86YX1</accession>
<keyword id="KW-0479">Metal-binding</keyword>
<keyword id="KW-0480">Metal-thiolate cluster</keyword>
<keyword id="KW-1267">Proteomics identification</keyword>
<keyword id="KW-1185">Reference proteome</keyword>
<organism>
    <name type="scientific">Homo sapiens</name>
    <name type="common">Human</name>
    <dbReference type="NCBI Taxonomy" id="9606"/>
    <lineage>
        <taxon>Eukaryota</taxon>
        <taxon>Metazoa</taxon>
        <taxon>Chordata</taxon>
        <taxon>Craniata</taxon>
        <taxon>Vertebrata</taxon>
        <taxon>Euteleostomi</taxon>
        <taxon>Mammalia</taxon>
        <taxon>Eutheria</taxon>
        <taxon>Euarchontoglires</taxon>
        <taxon>Primates</taxon>
        <taxon>Haplorrhini</taxon>
        <taxon>Catarrhini</taxon>
        <taxon>Hominidae</taxon>
        <taxon>Homo</taxon>
    </lineage>
</organism>
<dbReference type="EMBL" id="AF348999">
    <property type="protein sequence ID" value="AAO32959.2"/>
    <property type="molecule type" value="mRNA"/>
</dbReference>
<dbReference type="SMR" id="A1L3X4"/>
<dbReference type="FunCoup" id="A1L3X4">
    <property type="interactions" value="3"/>
</dbReference>
<dbReference type="IntAct" id="A1L3X4">
    <property type="interactions" value="3"/>
</dbReference>
<dbReference type="DrugBank" id="DB09130">
    <property type="generic name" value="Copper"/>
</dbReference>
<dbReference type="DrugBank" id="DB12965">
    <property type="generic name" value="Silver"/>
</dbReference>
<dbReference type="BioMuta" id="HGNC:7396"/>
<dbReference type="MassIVE" id="A1L3X4"/>
<dbReference type="AGR" id="HGNC:7396"/>
<dbReference type="GeneCards" id="MT1DP"/>
<dbReference type="HGNC" id="HGNC:7396">
    <property type="gene designation" value="MT1DP"/>
</dbReference>
<dbReference type="neXtProt" id="NX_A1L3X4"/>
<dbReference type="InParanoid" id="A1L3X4"/>
<dbReference type="PAN-GO" id="A1L3X4">
    <property type="GO annotations" value="8 GO annotations based on evolutionary models"/>
</dbReference>
<dbReference type="PathwayCommons" id="A1L3X4"/>
<dbReference type="SignaLink" id="A1L3X4"/>
<dbReference type="Pharos" id="A1L3X4">
    <property type="development level" value="Tdark"/>
</dbReference>
<dbReference type="Proteomes" id="UP000005640">
    <property type="component" value="Unplaced"/>
</dbReference>
<dbReference type="GO" id="GO:0005737">
    <property type="term" value="C:cytoplasm"/>
    <property type="evidence" value="ECO:0000318"/>
    <property type="project" value="GO_Central"/>
</dbReference>
<dbReference type="GO" id="GO:0005634">
    <property type="term" value="C:nucleus"/>
    <property type="evidence" value="ECO:0000318"/>
    <property type="project" value="GO_Central"/>
</dbReference>
<dbReference type="GO" id="GO:0046872">
    <property type="term" value="F:metal ion binding"/>
    <property type="evidence" value="ECO:0000318"/>
    <property type="project" value="GO_Central"/>
</dbReference>
<dbReference type="GO" id="GO:0071276">
    <property type="term" value="P:cellular response to cadmium ion"/>
    <property type="evidence" value="ECO:0000318"/>
    <property type="project" value="GO_Central"/>
</dbReference>
<dbReference type="GO" id="GO:0071280">
    <property type="term" value="P:cellular response to copper ion"/>
    <property type="evidence" value="ECO:0000318"/>
    <property type="project" value="GO_Central"/>
</dbReference>
<dbReference type="GO" id="GO:0071294">
    <property type="term" value="P:cellular response to zinc ion"/>
    <property type="evidence" value="ECO:0000318"/>
    <property type="project" value="GO_Central"/>
</dbReference>
<dbReference type="GO" id="GO:0010273">
    <property type="term" value="P:detoxification of copper ion"/>
    <property type="evidence" value="ECO:0000318"/>
    <property type="project" value="GO_Central"/>
</dbReference>
<dbReference type="GO" id="GO:0006882">
    <property type="term" value="P:intracellular zinc ion homeostasis"/>
    <property type="evidence" value="ECO:0000318"/>
    <property type="project" value="GO_Central"/>
</dbReference>
<dbReference type="FunFam" id="4.10.10.10:FF:000002">
    <property type="entry name" value="Metallothionein"/>
    <property type="match status" value="1"/>
</dbReference>
<dbReference type="Gene3D" id="4.10.10.10">
    <property type="entry name" value="Metallothionein Isoform II"/>
    <property type="match status" value="1"/>
</dbReference>
<dbReference type="InterPro" id="IPR017854">
    <property type="entry name" value="Metalthion_dom_sf"/>
</dbReference>
<dbReference type="InterPro" id="IPR023587">
    <property type="entry name" value="Metalthion_dom_sf_vert"/>
</dbReference>
<dbReference type="InterPro" id="IPR000006">
    <property type="entry name" value="Metalthion_vert"/>
</dbReference>
<dbReference type="PANTHER" id="PTHR23299">
    <property type="entry name" value="METALLOTHIONEIN"/>
    <property type="match status" value="1"/>
</dbReference>
<dbReference type="PANTHER" id="PTHR23299:SF48">
    <property type="entry name" value="METALLOTHIONEIN-1E-RELATED"/>
    <property type="match status" value="1"/>
</dbReference>
<dbReference type="Pfam" id="PF00131">
    <property type="entry name" value="Metallothio"/>
    <property type="match status" value="1"/>
</dbReference>
<dbReference type="PRINTS" id="PR00860">
    <property type="entry name" value="MTVERTEBRATE"/>
</dbReference>
<dbReference type="SUPFAM" id="SSF57868">
    <property type="entry name" value="Metallothionein"/>
    <property type="match status" value="1"/>
</dbReference>
<comment type="function">
    <text evidence="1">Metallothioneins have a high content of cysteine residues that bind various heavy metals.</text>
</comment>
<comment type="interaction">
    <interactant intactId="EBI-10172129">
        <id>A1L3X4</id>
    </interactant>
    <interactant intactId="EBI-10172150">
        <id>P60370</id>
        <label>KRTAP10-5</label>
    </interactant>
    <organismsDiffer>false</organismsDiffer>
    <experiments>3</experiments>
</comment>
<comment type="interaction">
    <interactant intactId="EBI-10172129">
        <id>A1L3X4</id>
    </interactant>
    <interactant intactId="EBI-10172052">
        <id>P60411</id>
        <label>KRTAP10-9</label>
    </interactant>
    <organismsDiffer>false</organismsDiffer>
    <experiments>3</experiments>
</comment>
<comment type="interaction">
    <interactant intactId="EBI-10172129">
        <id>A1L3X4</id>
    </interactant>
    <interactant intactId="EBI-748397">
        <id>P50222</id>
        <label>MEOX2</label>
    </interactant>
    <organismsDiffer>false</organismsDiffer>
    <experiments>3</experiments>
</comment>
<comment type="similarity">
    <text evidence="3">Belongs to the metallothionein superfamily. Type 1 family.</text>
</comment>
<comment type="caution">
    <text evidence="3">Could be the product of a pseudogene.</text>
</comment>